<gene>
    <name evidence="19" type="primary">PRUNE1</name>
    <name type="synonym">PRUNE</name>
</gene>
<reference key="1">
    <citation type="journal article" date="1999" name="Oncogene">
        <title>Evidence for interaction between human PRUNE and nm23-H1 NDPKinase.</title>
        <authorList>
            <person name="Reymond A."/>
            <person name="Volorio S."/>
            <person name="Merla G."/>
            <person name="Al-Maghtheh M."/>
            <person name="Zuffardi O."/>
            <person name="Bulfone A."/>
            <person name="Ballabio A."/>
            <person name="Zollo M."/>
        </authorList>
    </citation>
    <scope>NUCLEOTIDE SEQUENCE [MRNA] (ISOFORM 1)</scope>
    <scope>TISSUE SPECIFICITY</scope>
    <scope>INTERACTION WITH NME1</scope>
    <scope>SUBCELLULAR LOCATION</scope>
    <scope>FUNCTION</scope>
</reference>
<reference key="2">
    <citation type="submission" date="1999-01" db="EMBL/GenBank/DDBJ databases">
        <title>Human Prune homolog.</title>
        <authorList>
            <person name="Zollo M."/>
            <person name="Volorio S."/>
        </authorList>
    </citation>
    <scope>NUCLEOTIDE SEQUENCE [MRNA] (ISOFORMS 2 AND 4)</scope>
</reference>
<reference key="3">
    <citation type="journal article" date="2004" name="Nat. Genet.">
        <title>Complete sequencing and characterization of 21,243 full-length human cDNAs.</title>
        <authorList>
            <person name="Ota T."/>
            <person name="Suzuki Y."/>
            <person name="Nishikawa T."/>
            <person name="Otsuki T."/>
            <person name="Sugiyama T."/>
            <person name="Irie R."/>
            <person name="Wakamatsu A."/>
            <person name="Hayashi K."/>
            <person name="Sato H."/>
            <person name="Nagai K."/>
            <person name="Kimura K."/>
            <person name="Makita H."/>
            <person name="Sekine M."/>
            <person name="Obayashi M."/>
            <person name="Nishi T."/>
            <person name="Shibahara T."/>
            <person name="Tanaka T."/>
            <person name="Ishii S."/>
            <person name="Yamamoto J."/>
            <person name="Saito K."/>
            <person name="Kawai Y."/>
            <person name="Isono Y."/>
            <person name="Nakamura Y."/>
            <person name="Nagahari K."/>
            <person name="Murakami K."/>
            <person name="Yasuda T."/>
            <person name="Iwayanagi T."/>
            <person name="Wagatsuma M."/>
            <person name="Shiratori A."/>
            <person name="Sudo H."/>
            <person name="Hosoiri T."/>
            <person name="Kaku Y."/>
            <person name="Kodaira H."/>
            <person name="Kondo H."/>
            <person name="Sugawara M."/>
            <person name="Takahashi M."/>
            <person name="Kanda K."/>
            <person name="Yokoi T."/>
            <person name="Furuya T."/>
            <person name="Kikkawa E."/>
            <person name="Omura Y."/>
            <person name="Abe K."/>
            <person name="Kamihara K."/>
            <person name="Katsuta N."/>
            <person name="Sato K."/>
            <person name="Tanikawa M."/>
            <person name="Yamazaki M."/>
            <person name="Ninomiya K."/>
            <person name="Ishibashi T."/>
            <person name="Yamashita H."/>
            <person name="Murakawa K."/>
            <person name="Fujimori K."/>
            <person name="Tanai H."/>
            <person name="Kimata M."/>
            <person name="Watanabe M."/>
            <person name="Hiraoka S."/>
            <person name="Chiba Y."/>
            <person name="Ishida S."/>
            <person name="Ono Y."/>
            <person name="Takiguchi S."/>
            <person name="Watanabe S."/>
            <person name="Yosida M."/>
            <person name="Hotuta T."/>
            <person name="Kusano J."/>
            <person name="Kanehori K."/>
            <person name="Takahashi-Fujii A."/>
            <person name="Hara H."/>
            <person name="Tanase T.-O."/>
            <person name="Nomura Y."/>
            <person name="Togiya S."/>
            <person name="Komai F."/>
            <person name="Hara R."/>
            <person name="Takeuchi K."/>
            <person name="Arita M."/>
            <person name="Imose N."/>
            <person name="Musashino K."/>
            <person name="Yuuki H."/>
            <person name="Oshima A."/>
            <person name="Sasaki N."/>
            <person name="Aotsuka S."/>
            <person name="Yoshikawa Y."/>
            <person name="Matsunawa H."/>
            <person name="Ichihara T."/>
            <person name="Shiohata N."/>
            <person name="Sano S."/>
            <person name="Moriya S."/>
            <person name="Momiyama H."/>
            <person name="Satoh N."/>
            <person name="Takami S."/>
            <person name="Terashima Y."/>
            <person name="Suzuki O."/>
            <person name="Nakagawa S."/>
            <person name="Senoh A."/>
            <person name="Mizoguchi H."/>
            <person name="Goto Y."/>
            <person name="Shimizu F."/>
            <person name="Wakebe H."/>
            <person name="Hishigaki H."/>
            <person name="Watanabe T."/>
            <person name="Sugiyama A."/>
            <person name="Takemoto M."/>
            <person name="Kawakami B."/>
            <person name="Yamazaki M."/>
            <person name="Watanabe K."/>
            <person name="Kumagai A."/>
            <person name="Itakura S."/>
            <person name="Fukuzumi Y."/>
            <person name="Fujimori Y."/>
            <person name="Komiyama M."/>
            <person name="Tashiro H."/>
            <person name="Tanigami A."/>
            <person name="Fujiwara T."/>
            <person name="Ono T."/>
            <person name="Yamada K."/>
            <person name="Fujii Y."/>
            <person name="Ozaki K."/>
            <person name="Hirao M."/>
            <person name="Ohmori Y."/>
            <person name="Kawabata A."/>
            <person name="Hikiji T."/>
            <person name="Kobatake N."/>
            <person name="Inagaki H."/>
            <person name="Ikema Y."/>
            <person name="Okamoto S."/>
            <person name="Okitani R."/>
            <person name="Kawakami T."/>
            <person name="Noguchi S."/>
            <person name="Itoh T."/>
            <person name="Shigeta K."/>
            <person name="Senba T."/>
            <person name="Matsumura K."/>
            <person name="Nakajima Y."/>
            <person name="Mizuno T."/>
            <person name="Morinaga M."/>
            <person name="Sasaki M."/>
            <person name="Togashi T."/>
            <person name="Oyama M."/>
            <person name="Hata H."/>
            <person name="Watanabe M."/>
            <person name="Komatsu T."/>
            <person name="Mizushima-Sugano J."/>
            <person name="Satoh T."/>
            <person name="Shirai Y."/>
            <person name="Takahashi Y."/>
            <person name="Nakagawa K."/>
            <person name="Okumura K."/>
            <person name="Nagase T."/>
            <person name="Nomura N."/>
            <person name="Kikuchi H."/>
            <person name="Masuho Y."/>
            <person name="Yamashita R."/>
            <person name="Nakai K."/>
            <person name="Yada T."/>
            <person name="Nakamura Y."/>
            <person name="Ohara O."/>
            <person name="Isogai T."/>
            <person name="Sugano S."/>
        </authorList>
    </citation>
    <scope>NUCLEOTIDE SEQUENCE [LARGE SCALE MRNA] (ISOFORMS 1; 5 AND 7)</scope>
    <scope>NUCLEOTIDE SEQUENCE [LARGE SCALE MRNA] OF 211-453 (ISOFORMS 1/3)</scope>
    <source>
        <tissue>Brain cortex</tissue>
        <tissue>Kidney</tissue>
        <tissue>Thyroid</tissue>
    </source>
</reference>
<reference key="4">
    <citation type="journal article" date="2006" name="Nature">
        <title>The DNA sequence and biological annotation of human chromosome 1.</title>
        <authorList>
            <person name="Gregory S.G."/>
            <person name="Barlow K.F."/>
            <person name="McLay K.E."/>
            <person name="Kaul R."/>
            <person name="Swarbreck D."/>
            <person name="Dunham A."/>
            <person name="Scott C.E."/>
            <person name="Howe K.L."/>
            <person name="Woodfine K."/>
            <person name="Spencer C.C.A."/>
            <person name="Jones M.C."/>
            <person name="Gillson C."/>
            <person name="Searle S."/>
            <person name="Zhou Y."/>
            <person name="Kokocinski F."/>
            <person name="McDonald L."/>
            <person name="Evans R."/>
            <person name="Phillips K."/>
            <person name="Atkinson A."/>
            <person name="Cooper R."/>
            <person name="Jones C."/>
            <person name="Hall R.E."/>
            <person name="Andrews T.D."/>
            <person name="Lloyd C."/>
            <person name="Ainscough R."/>
            <person name="Almeida J.P."/>
            <person name="Ambrose K.D."/>
            <person name="Anderson F."/>
            <person name="Andrew R.W."/>
            <person name="Ashwell R.I.S."/>
            <person name="Aubin K."/>
            <person name="Babbage A.K."/>
            <person name="Bagguley C.L."/>
            <person name="Bailey J."/>
            <person name="Beasley H."/>
            <person name="Bethel G."/>
            <person name="Bird C.P."/>
            <person name="Bray-Allen S."/>
            <person name="Brown J.Y."/>
            <person name="Brown A.J."/>
            <person name="Buckley D."/>
            <person name="Burton J."/>
            <person name="Bye J."/>
            <person name="Carder C."/>
            <person name="Chapman J.C."/>
            <person name="Clark S.Y."/>
            <person name="Clarke G."/>
            <person name="Clee C."/>
            <person name="Cobley V."/>
            <person name="Collier R.E."/>
            <person name="Corby N."/>
            <person name="Coville G.J."/>
            <person name="Davies J."/>
            <person name="Deadman R."/>
            <person name="Dunn M."/>
            <person name="Earthrowl M."/>
            <person name="Ellington A.G."/>
            <person name="Errington H."/>
            <person name="Frankish A."/>
            <person name="Frankland J."/>
            <person name="French L."/>
            <person name="Garner P."/>
            <person name="Garnett J."/>
            <person name="Gay L."/>
            <person name="Ghori M.R.J."/>
            <person name="Gibson R."/>
            <person name="Gilby L.M."/>
            <person name="Gillett W."/>
            <person name="Glithero R.J."/>
            <person name="Grafham D.V."/>
            <person name="Griffiths C."/>
            <person name="Griffiths-Jones S."/>
            <person name="Grocock R."/>
            <person name="Hammond S."/>
            <person name="Harrison E.S.I."/>
            <person name="Hart E."/>
            <person name="Haugen E."/>
            <person name="Heath P.D."/>
            <person name="Holmes S."/>
            <person name="Holt K."/>
            <person name="Howden P.J."/>
            <person name="Hunt A.R."/>
            <person name="Hunt S.E."/>
            <person name="Hunter G."/>
            <person name="Isherwood J."/>
            <person name="James R."/>
            <person name="Johnson C."/>
            <person name="Johnson D."/>
            <person name="Joy A."/>
            <person name="Kay M."/>
            <person name="Kershaw J.K."/>
            <person name="Kibukawa M."/>
            <person name="Kimberley A.M."/>
            <person name="King A."/>
            <person name="Knights A.J."/>
            <person name="Lad H."/>
            <person name="Laird G."/>
            <person name="Lawlor S."/>
            <person name="Leongamornlert D.A."/>
            <person name="Lloyd D.M."/>
            <person name="Loveland J."/>
            <person name="Lovell J."/>
            <person name="Lush M.J."/>
            <person name="Lyne R."/>
            <person name="Martin S."/>
            <person name="Mashreghi-Mohammadi M."/>
            <person name="Matthews L."/>
            <person name="Matthews N.S.W."/>
            <person name="McLaren S."/>
            <person name="Milne S."/>
            <person name="Mistry S."/>
            <person name="Moore M.J.F."/>
            <person name="Nickerson T."/>
            <person name="O'Dell C.N."/>
            <person name="Oliver K."/>
            <person name="Palmeiri A."/>
            <person name="Palmer S.A."/>
            <person name="Parker A."/>
            <person name="Patel D."/>
            <person name="Pearce A.V."/>
            <person name="Peck A.I."/>
            <person name="Pelan S."/>
            <person name="Phelps K."/>
            <person name="Phillimore B.J."/>
            <person name="Plumb R."/>
            <person name="Rajan J."/>
            <person name="Raymond C."/>
            <person name="Rouse G."/>
            <person name="Saenphimmachak C."/>
            <person name="Sehra H.K."/>
            <person name="Sheridan E."/>
            <person name="Shownkeen R."/>
            <person name="Sims S."/>
            <person name="Skuce C.D."/>
            <person name="Smith M."/>
            <person name="Steward C."/>
            <person name="Subramanian S."/>
            <person name="Sycamore N."/>
            <person name="Tracey A."/>
            <person name="Tromans A."/>
            <person name="Van Helmond Z."/>
            <person name="Wall M."/>
            <person name="Wallis J.M."/>
            <person name="White S."/>
            <person name="Whitehead S.L."/>
            <person name="Wilkinson J.E."/>
            <person name="Willey D.L."/>
            <person name="Williams H."/>
            <person name="Wilming L."/>
            <person name="Wray P.W."/>
            <person name="Wu Z."/>
            <person name="Coulson A."/>
            <person name="Vaudin M."/>
            <person name="Sulston J.E."/>
            <person name="Durbin R.M."/>
            <person name="Hubbard T."/>
            <person name="Wooster R."/>
            <person name="Dunham I."/>
            <person name="Carter N.P."/>
            <person name="McVean G."/>
            <person name="Ross M.T."/>
            <person name="Harrow J."/>
            <person name="Olson M.V."/>
            <person name="Beck S."/>
            <person name="Rogers J."/>
            <person name="Bentley D.R."/>
        </authorList>
    </citation>
    <scope>NUCLEOTIDE SEQUENCE [LARGE SCALE GENOMIC DNA]</scope>
</reference>
<reference key="5">
    <citation type="submission" date="2005-09" db="EMBL/GenBank/DDBJ databases">
        <authorList>
            <person name="Mural R.J."/>
            <person name="Istrail S."/>
            <person name="Sutton G.G."/>
            <person name="Florea L."/>
            <person name="Halpern A.L."/>
            <person name="Mobarry C.M."/>
            <person name="Lippert R."/>
            <person name="Walenz B."/>
            <person name="Shatkay H."/>
            <person name="Dew I."/>
            <person name="Miller J.R."/>
            <person name="Flanigan M.J."/>
            <person name="Edwards N.J."/>
            <person name="Bolanos R."/>
            <person name="Fasulo D."/>
            <person name="Halldorsson B.V."/>
            <person name="Hannenhalli S."/>
            <person name="Turner R."/>
            <person name="Yooseph S."/>
            <person name="Lu F."/>
            <person name="Nusskern D.R."/>
            <person name="Shue B.C."/>
            <person name="Zheng X.H."/>
            <person name="Zhong F."/>
            <person name="Delcher A.L."/>
            <person name="Huson D.H."/>
            <person name="Kravitz S.A."/>
            <person name="Mouchard L."/>
            <person name="Reinert K."/>
            <person name="Remington K.A."/>
            <person name="Clark A.G."/>
            <person name="Waterman M.S."/>
            <person name="Eichler E.E."/>
            <person name="Adams M.D."/>
            <person name="Hunkapiller M.W."/>
            <person name="Myers E.W."/>
            <person name="Venter J.C."/>
        </authorList>
    </citation>
    <scope>NUCLEOTIDE SEQUENCE [LARGE SCALE GENOMIC DNA]</scope>
</reference>
<reference key="6">
    <citation type="journal article" date="2004" name="Genome Res.">
        <title>The status, quality, and expansion of the NIH full-length cDNA project: the Mammalian Gene Collection (MGC).</title>
        <authorList>
            <consortium name="The MGC Project Team"/>
        </authorList>
    </citation>
    <scope>NUCLEOTIDE SEQUENCE [LARGE SCALE MRNA] (ISOFORMS 1; 3 AND 6)</scope>
    <source>
        <tissue>Blood</tissue>
        <tissue>Brain</tissue>
    </source>
</reference>
<reference key="7">
    <citation type="journal article" date="1998" name="DNA Seq.">
        <title>Sequencing analysis of forty-eight human image cDNA clones similar to Drosophila mutant protein.</title>
        <authorList>
            <person name="Volorio S."/>
            <person name="Simon G."/>
            <person name="Repetto M."/>
            <person name="Cucciardi M."/>
            <person name="Banfi S."/>
            <person name="Borsani G."/>
            <person name="Ballabio A."/>
            <person name="Zollo M."/>
        </authorList>
    </citation>
    <scope>NUCLEOTIDE SEQUENCE [MRNA] OF 19-453 (ISOFORM 1)</scope>
    <source>
        <tissue>Brain</tissue>
    </source>
</reference>
<reference key="8">
    <citation type="journal article" date="2007" name="BMC Genomics">
        <title>The full-ORF clone resource of the German cDNA consortium.</title>
        <authorList>
            <person name="Bechtel S."/>
            <person name="Rosenfelder H."/>
            <person name="Duda A."/>
            <person name="Schmidt C.P."/>
            <person name="Ernst U."/>
            <person name="Wellenreuther R."/>
            <person name="Mehrle A."/>
            <person name="Schuster C."/>
            <person name="Bahr A."/>
            <person name="Bloecker H."/>
            <person name="Heubner D."/>
            <person name="Hoerlein A."/>
            <person name="Michel G."/>
            <person name="Wedler H."/>
            <person name="Koehrer K."/>
            <person name="Ottenwaelder B."/>
            <person name="Poustka A."/>
            <person name="Wiemann S."/>
            <person name="Schupp I."/>
        </authorList>
    </citation>
    <scope>NUCLEOTIDE SEQUENCE [LARGE SCALE MRNA] OF 368-453 (ISOFORMS 1/2/3/4/5/6/7)</scope>
    <source>
        <tissue>Testis</tissue>
    </source>
</reference>
<reference key="9">
    <citation type="journal article" date="2001" name="Oncogene">
        <title>Amplification and overexpression of PRUNE in human sarcomas and breast carcinomas-a possible mechanism for altering the nm23-H1 activity.</title>
        <authorList>
            <person name="Forus A."/>
            <person name="D'Angelo A."/>
            <person name="Henriksen J."/>
            <person name="Merla G."/>
            <person name="Maelandsmo G.M."/>
            <person name="Floerenes V.A."/>
            <person name="Olivieri S."/>
            <person name="Bjerkehagen B."/>
            <person name="Meza-Zepeda L.A."/>
            <person name="del Vecchio Blanco F."/>
            <person name="Mueller C."/>
            <person name="Sanvito F."/>
            <person name="Kononen J."/>
            <person name="Nesland J.M."/>
            <person name="Fodstad O."/>
            <person name="Reymond A."/>
            <person name="Kallioniemi O.-P."/>
            <person name="Arrigoni G."/>
            <person name="Ballabio A."/>
            <person name="Myklebost O."/>
            <person name="Zollo M."/>
        </authorList>
    </citation>
    <scope>TISSUE SPECIFICITY</scope>
    <scope>FUNCTION</scope>
</reference>
<reference key="10">
    <citation type="journal article" date="2004" name="Cancer Cell">
        <title>Prune cAMP phosphodiesterase binds nm23-H1 and promotes cancer metastasis.</title>
        <authorList>
            <person name="D'Angelo A."/>
            <person name="Garzia L."/>
            <person name="Andre A."/>
            <person name="Carotenuto P."/>
            <person name="Aglio V."/>
            <person name="Guardiola O."/>
            <person name="Arrigoni G."/>
            <person name="Cossu A."/>
            <person name="Palmieri G."/>
            <person name="Aravind L."/>
            <person name="Zollo M."/>
        </authorList>
    </citation>
    <scope>FUNCTION</scope>
    <scope>BIOPHYSICOCHEMICAL PROPERTIES</scope>
    <scope>INTERACTION WITH NME1</scope>
    <scope>ACTIVITY REGULATION</scope>
    <scope>MUTAGENESIS OF ASP-28; ASP-106; 126-ASP--PRO-129 AND ASP-179</scope>
</reference>
<reference key="11">
    <citation type="journal article" date="2005" name="Clin. Cancer Res.">
        <title>Overexpression of h-prune in breast cancer is correlated with advanced disease status.</title>
        <authorList>
            <person name="Zollo M."/>
            <person name="Andre A."/>
            <person name="Cossu A."/>
            <person name="Sini M.C."/>
            <person name="D'Angelo A."/>
            <person name="Marino N."/>
            <person name="Budroni M."/>
            <person name="Tanda F."/>
            <person name="Arrigoni G."/>
            <person name="Palmieri G."/>
        </authorList>
    </citation>
    <scope>TISSUE SPECIFICITY</scope>
    <scope>SUBCELLULAR LOCATION</scope>
</reference>
<reference key="12">
    <citation type="journal article" date="2006" name="Mol. Cell. Biol.">
        <title>Glycogen synthase kinase 3 and h-prune regulate cell migration by modulating focal adhesions.</title>
        <authorList>
            <person name="Kobayashi T."/>
            <person name="Hino S."/>
            <person name="Oue N."/>
            <person name="Asahara T."/>
            <person name="Zollo M."/>
            <person name="Yasui W."/>
            <person name="Kikuchi A."/>
        </authorList>
    </citation>
    <scope>INTERACTION WITH GSK3B</scope>
    <scope>SUBCELLULAR LOCATION</scope>
    <scope>FUNCTION</scope>
</reference>
<reference key="13">
    <citation type="journal article" date="2007" name="Biochem. J.">
        <title>Domain mapping on the human metastasis regulator protein h-Prune reveals a C-terminal dimerization domain.</title>
        <authorList>
            <person name="Middelhaufe S."/>
            <person name="Garzia L."/>
            <person name="Ohndorf U.M."/>
            <person name="Kachholz B."/>
            <person name="Zollo M."/>
            <person name="Steegborn C."/>
        </authorList>
    </citation>
    <scope>INTERACTION WITH NME1</scope>
    <scope>BIOPHYSICOCHEMICAL PROPERTIES</scope>
    <scope>SUBUNIT</scope>
</reference>
<reference key="14">
    <citation type="journal article" date="2008" name="Oncogene">
        <title>Phosphorylation of nm23-H1 by CKI induces its complex formation with h-prune and promotes cell motility.</title>
        <authorList>
            <person name="Garzia L."/>
            <person name="D'Angelo A."/>
            <person name="Amoresano A."/>
            <person name="Knauer S.K."/>
            <person name="Cirulli C."/>
            <person name="Campanella C."/>
            <person name="Stauber R.H."/>
            <person name="Steegborn C."/>
            <person name="Iolascon A."/>
            <person name="Zollo M."/>
        </authorList>
    </citation>
    <scope>INTERACTION WITH NME1</scope>
    <scope>FUNCTION</scope>
</reference>
<reference key="15">
    <citation type="journal article" date="2011" name="BMC Syst. Biol.">
        <title>Initial characterization of the human central proteome.</title>
        <authorList>
            <person name="Burkard T.R."/>
            <person name="Planyavsky M."/>
            <person name="Kaupe I."/>
            <person name="Breitwieser F.P."/>
            <person name="Buerckstuemmer T."/>
            <person name="Bennett K.L."/>
            <person name="Superti-Furga G."/>
            <person name="Colinge J."/>
        </authorList>
    </citation>
    <scope>IDENTIFICATION BY MASS SPECTROMETRY [LARGE SCALE ANALYSIS]</scope>
</reference>
<reference key="16">
    <citation type="journal article" date="2012" name="Proc. Natl. Acad. Sci. U.S.A.">
        <title>N-terminal acetylome analyses and functional insights of the N-terminal acetyltransferase NatB.</title>
        <authorList>
            <person name="Van Damme P."/>
            <person name="Lasa M."/>
            <person name="Polevoda B."/>
            <person name="Gazquez C."/>
            <person name="Elosegui-Artola A."/>
            <person name="Kim D.S."/>
            <person name="De Juan-Pardo E."/>
            <person name="Demeyer K."/>
            <person name="Hole K."/>
            <person name="Larrea E."/>
            <person name="Timmerman E."/>
            <person name="Prieto J."/>
            <person name="Arnesen T."/>
            <person name="Sherman F."/>
            <person name="Gevaert K."/>
            <person name="Aldabe R."/>
        </authorList>
    </citation>
    <scope>ACETYLATION [LARGE SCALE ANALYSIS] AT MET-1</scope>
    <scope>IDENTIFICATION BY MASS SPECTROMETRY [LARGE SCALE ANALYSIS]</scope>
</reference>
<reference key="17">
    <citation type="journal article" date="2023" name="Life. Sci Alliance">
        <title>N-terminal proteoforms may engage in different protein complexes.</title>
        <authorList>
            <person name="Bogaert A."/>
            <person name="Fijalkowska D."/>
            <person name="Staes A."/>
            <person name="Van de Steene T."/>
            <person name="Vuylsteke M."/>
            <person name="Stadler C."/>
            <person name="Eyckerman S."/>
            <person name="Spirohn K."/>
            <person name="Hao T."/>
            <person name="Calderwood M.A."/>
            <person name="Gevaert K."/>
        </authorList>
    </citation>
    <scope>ACETYLATION AT MET-1</scope>
</reference>
<reference key="18">
    <citation type="journal article" date="2017" name="Am. J. Med. Genet. A">
        <title>Homozygous mutation in PRUNE1 in an Oji-Cree male with a complex neurological phenotype.</title>
        <authorList>
            <person name="Costain G."/>
            <person name="Shugar A."/>
            <person name="Krishnan P."/>
            <person name="Mahmutoglu S."/>
            <person name="Laughlin S."/>
            <person name="Kannu P."/>
        </authorList>
    </citation>
    <scope>INVOLVEMENT IN NMIHBA</scope>
</reference>
<reference key="19">
    <citation type="journal article" date="2017" name="Brain">
        <title>PRUNE is crucial for normal brain development and mutated in microcephaly with neurodevelopmental impairment.</title>
        <authorList>
            <person name="Zollo M."/>
            <person name="Ahmed M."/>
            <person name="Ferrucci V."/>
            <person name="Salpietro V."/>
            <person name="Asadzadeh F."/>
            <person name="Carotenuto M."/>
            <person name="Maroofian R."/>
            <person name="Al-Amri A."/>
            <person name="Singh R."/>
            <person name="Scognamiglio I."/>
            <person name="Mojarrad M."/>
            <person name="Musella L."/>
            <person name="Duilio A."/>
            <person name="Di Somma A."/>
            <person name="Karaca E."/>
            <person name="Rajab A."/>
            <person name="Al-Khayat A."/>
            <person name="Mohan Mohapatra T."/>
            <person name="Eslahi A."/>
            <person name="Ashrafzadeh F."/>
            <person name="Rawlins L.E."/>
            <person name="Prasad R."/>
            <person name="Gupta R."/>
            <person name="Kumari P."/>
            <person name="Srivastava M."/>
            <person name="Cozzolino F."/>
            <person name="Kumar Rai S."/>
            <person name="Monti M."/>
            <person name="Harlalka G.V."/>
            <person name="Simpson M.A."/>
            <person name="Rich P."/>
            <person name="Al-Salmi F."/>
            <person name="Patton M.A."/>
            <person name="Chioza B.A."/>
            <person name="Efthymiou S."/>
            <person name="Granata F."/>
            <person name="Di Rosa G."/>
            <person name="Wiethoff S."/>
            <person name="Borgione E."/>
            <person name="Scuderi C."/>
            <person name="Mankad K."/>
            <person name="Hanna M.G."/>
            <person name="Pucci P."/>
            <person name="Houlden H."/>
            <person name="Lupski J.R."/>
            <person name="Crosby A.H."/>
            <person name="Baple E.L."/>
        </authorList>
    </citation>
    <scope>FUNCTION</scope>
    <scope>INTERACTION WITH TUBULIN</scope>
    <scope>INVOLVEMENT IN NMIHBA</scope>
    <scope>VARIANTS NMIHBA ASN-30; THR-54; ASN-106 AND TRP-297</scope>
    <scope>CHARACTERIZATION OF VARIANTS NMIHBA ASN-30 AND TRP-297</scope>
</reference>
<reference key="20">
    <citation type="journal article" date="2015" name="Neuron">
        <title>Genes that affect brain structure and function identified by rare variant analyses of mendelian neurologic disease.</title>
        <authorList>
            <person name="Karaca E."/>
            <person name="Harel T."/>
            <person name="Pehlivan D."/>
            <person name="Jhangiani S.N."/>
            <person name="Gambin T."/>
            <person name="Coban Akdemir Z."/>
            <person name="Gonzaga-Jauregui C."/>
            <person name="Erdin S."/>
            <person name="Bayram Y."/>
            <person name="Campbell I.M."/>
            <person name="Hunter J.V."/>
            <person name="Atik M.M."/>
            <person name="Van Esch H."/>
            <person name="Yuan B."/>
            <person name="Wiszniewski W."/>
            <person name="Isikay S."/>
            <person name="Yesil G."/>
            <person name="Yuregir O.O."/>
            <person name="Tug Bozdogan S."/>
            <person name="Aslan H."/>
            <person name="Aydin H."/>
            <person name="Tos T."/>
            <person name="Aksoy A."/>
            <person name="De Vivo D.C."/>
            <person name="Jain P."/>
            <person name="Geckinli B.B."/>
            <person name="Sezer O."/>
            <person name="Gul D."/>
            <person name="Durmaz B."/>
            <person name="Cogulu O."/>
            <person name="Ozkinay F."/>
            <person name="Topcu V."/>
            <person name="Candan S."/>
            <person name="Cebi A.H."/>
            <person name="Ikbal M."/>
            <person name="Yilmaz Gulec E."/>
            <person name="Gezdirici A."/>
            <person name="Koparir E."/>
            <person name="Ekici F."/>
            <person name="Coskun S."/>
            <person name="Cicek S."/>
            <person name="Karaer K."/>
            <person name="Koparir A."/>
            <person name="Duz M.B."/>
            <person name="Kirat E."/>
            <person name="Fenercioglu E."/>
            <person name="Ulucan H."/>
            <person name="Seven M."/>
            <person name="Guran T."/>
            <person name="Elcioglu N."/>
            <person name="Yildirim M.S."/>
            <person name="Aktas D."/>
            <person name="Alikasifoglu M."/>
            <person name="Ture M."/>
            <person name="Yakut T."/>
            <person name="Overton J.D."/>
            <person name="Yuksel A."/>
            <person name="Ozen M."/>
            <person name="Muzny D.M."/>
            <person name="Adams D.R."/>
            <person name="Boerwinkle E."/>
            <person name="Chung W.K."/>
            <person name="Gibbs R.A."/>
            <person name="Lupski J.R."/>
        </authorList>
    </citation>
    <scope>VARIANTS NMIHBA ASN-30; ASN-106; GLN-128 AND 174-GLY--LYS-453 DEL</scope>
</reference>
<evidence type="ECO:0000250" key="1"/>
<evidence type="ECO:0000250" key="2">
    <source>
        <dbReference type="UniProtKB" id="Q8BIW1"/>
    </source>
</evidence>
<evidence type="ECO:0000256" key="3">
    <source>
        <dbReference type="SAM" id="MobiDB-lite"/>
    </source>
</evidence>
<evidence type="ECO:0000269" key="4">
    <source>
    </source>
</evidence>
<evidence type="ECO:0000269" key="5">
    <source>
    </source>
</evidence>
<evidence type="ECO:0000269" key="6">
    <source>
    </source>
</evidence>
<evidence type="ECO:0000269" key="7">
    <source>
    </source>
</evidence>
<evidence type="ECO:0000269" key="8">
    <source>
    </source>
</evidence>
<evidence type="ECO:0000269" key="9">
    <source>
    </source>
</evidence>
<evidence type="ECO:0000269" key="10">
    <source>
    </source>
</evidence>
<evidence type="ECO:0000269" key="11">
    <source>
    </source>
</evidence>
<evidence type="ECO:0000269" key="12">
    <source>
    </source>
</evidence>
<evidence type="ECO:0000269" key="13">
    <source>
    </source>
</evidence>
<evidence type="ECO:0000269" key="14">
    <source>
    </source>
</evidence>
<evidence type="ECO:0000303" key="15">
    <source>
    </source>
</evidence>
<evidence type="ECO:0000303" key="16">
    <source>
    </source>
</evidence>
<evidence type="ECO:0000303" key="17">
    <source ref="2"/>
</evidence>
<evidence type="ECO:0000305" key="18"/>
<evidence type="ECO:0000312" key="19">
    <source>
        <dbReference type="HGNC" id="HGNC:13420"/>
    </source>
</evidence>
<evidence type="ECO:0007744" key="20">
    <source>
    </source>
</evidence>
<proteinExistence type="evidence at protein level"/>
<accession>Q86TP1</accession>
<accession>B2RCH8</accession>
<accession>B4DFL7</accession>
<accession>Q5SZF9</accession>
<accession>Q659E5</accession>
<accession>Q6P4E0</accession>
<accession>Q8N654</accession>
<accession>Q96JU5</accession>
<accession>Q9C071</accession>
<accession>Q9C072</accession>
<accession>Q9UIV0</accession>
<organism>
    <name type="scientific">Homo sapiens</name>
    <name type="common">Human</name>
    <dbReference type="NCBI Taxonomy" id="9606"/>
    <lineage>
        <taxon>Eukaryota</taxon>
        <taxon>Metazoa</taxon>
        <taxon>Chordata</taxon>
        <taxon>Craniata</taxon>
        <taxon>Vertebrata</taxon>
        <taxon>Euteleostomi</taxon>
        <taxon>Mammalia</taxon>
        <taxon>Eutheria</taxon>
        <taxon>Euarchontoglires</taxon>
        <taxon>Primates</taxon>
        <taxon>Haplorrhini</taxon>
        <taxon>Catarrhini</taxon>
        <taxon>Hominidae</taxon>
        <taxon>Homo</taxon>
    </lineage>
</organism>
<name>PRUN1_HUMAN</name>
<feature type="chain" id="PRO_0000337987" description="Exopolyphosphatase PRUNE1">
    <location>
        <begin position="1"/>
        <end position="453"/>
    </location>
</feature>
<feature type="region of interest" description="Essential for homodimerization">
    <location>
        <begin position="393"/>
        <end position="420"/>
    </location>
</feature>
<feature type="region of interest" description="Disordered" evidence="3">
    <location>
        <begin position="395"/>
        <end position="421"/>
    </location>
</feature>
<feature type="short sequence motif" description="DHH motif">
    <location>
        <begin position="106"/>
        <end position="108"/>
    </location>
</feature>
<feature type="binding site" evidence="1">
    <location>
        <position position="28"/>
    </location>
    <ligand>
        <name>Mn(2+)</name>
        <dbReference type="ChEBI" id="CHEBI:29035"/>
        <label>1</label>
    </ligand>
</feature>
<feature type="binding site" evidence="1">
    <location>
        <position position="30"/>
    </location>
    <ligand>
        <name>Mn(2+)</name>
        <dbReference type="ChEBI" id="CHEBI:29035"/>
        <label>2</label>
    </ligand>
</feature>
<feature type="binding site" evidence="1">
    <location>
        <position position="106"/>
    </location>
    <ligand>
        <name>Mn(2+)</name>
        <dbReference type="ChEBI" id="CHEBI:29035"/>
        <label>1</label>
    </ligand>
</feature>
<feature type="binding site" evidence="1">
    <location>
        <position position="106"/>
    </location>
    <ligand>
        <name>Mn(2+)</name>
        <dbReference type="ChEBI" id="CHEBI:29035"/>
        <label>2</label>
    </ligand>
</feature>
<feature type="binding site" evidence="1">
    <location>
        <position position="179"/>
    </location>
    <ligand>
        <name>Mn(2+)</name>
        <dbReference type="ChEBI" id="CHEBI:29035"/>
        <label>2</label>
    </ligand>
</feature>
<feature type="modified residue" description="N-acetylmethionine" evidence="14 20">
    <location>
        <position position="1"/>
    </location>
</feature>
<feature type="modified residue" description="Phosphoserine" evidence="2">
    <location>
        <position position="399"/>
    </location>
</feature>
<feature type="modified residue" description="Phosphothreonine" evidence="2">
    <location>
        <position position="410"/>
    </location>
</feature>
<feature type="modified residue" description="Phosphoserine" evidence="2">
    <location>
        <position position="414"/>
    </location>
</feature>
<feature type="splice variant" id="VSP_034013" description="In isoform 6 and isoform 7." evidence="15 16">
    <location>
        <begin position="1"/>
        <end position="232"/>
    </location>
</feature>
<feature type="splice variant" id="VSP_034014" description="In isoform 3 and isoform 5." evidence="15 16">
    <location>
        <begin position="1"/>
        <end position="182"/>
    </location>
</feature>
<feature type="splice variant" id="VSP_034015" description="In isoform 4." evidence="17">
    <location>
        <begin position="15"/>
        <end position="174"/>
    </location>
</feature>
<feature type="splice variant" id="VSP_034016" description="In isoform 2." evidence="17">
    <original>TTEAEEVFVPVLNIKRSELPLRGDIVFFLQKVHIPESILIFRDEIDLHALYQAGQLTLILVDHHILSK</original>
    <variation>A</variation>
    <location>
        <begin position="45"/>
        <end position="112"/>
    </location>
</feature>
<feature type="splice variant" id="VSP_034017" description="In isoform 4, isoform 5 and isoform 6." evidence="15 16 17">
    <location>
        <begin position="259"/>
        <end position="311"/>
    </location>
</feature>
<feature type="sequence variant" id="VAR_078986" description="In NMIHBA; loss of function in regulation of cell proliferation and migration; loss of function in neurogenesis; impaired regulation of microtubule polymerization; increased phosphatase activity; no effect on interaction with tubulin beta; dbSNP:rs1057521927." evidence="11 13">
    <original>D</original>
    <variation>N</variation>
    <location>
        <position position="30"/>
    </location>
</feature>
<feature type="sequence variant" id="VAR_078987" description="In NMIHBA; uncertain significance; dbSNP:rs1085308033." evidence="13">
    <original>P</original>
    <variation>T</variation>
    <location>
        <position position="54"/>
    </location>
</feature>
<feature type="sequence variant" id="VAR_078988" description="In NMIHBA; dbSNP:rs773618224." evidence="11 13">
    <original>D</original>
    <variation>N</variation>
    <location>
        <position position="106"/>
    </location>
</feature>
<feature type="sequence variant" id="VAR_078989" description="In NMIHBA; dbSNP:rs767769359." evidence="11">
    <original>R</original>
    <variation>Q</variation>
    <location>
        <position position="128"/>
    </location>
</feature>
<feature type="sequence variant" id="VAR_078990" description="In NMIHBA." evidence="11">
    <location>
        <begin position="174"/>
        <end position="453"/>
    </location>
</feature>
<feature type="sequence variant" id="VAR_078991" description="In NMIHBA; loss of function in regulation of cell proliferation and migration; loss of function in neurogenesis; impaired regulation of microtubule polymerization; increased phosphatase activity; decreased interaction with tubulin beta; dbSNP:rs752599948." evidence="13">
    <original>R</original>
    <variation>W</variation>
    <location>
        <position position="297"/>
    </location>
</feature>
<feature type="sequence variant" id="VAR_059559" description="In dbSNP:rs3738477.">
    <original>G</original>
    <variation>R</variation>
    <location>
        <position position="397"/>
    </location>
</feature>
<feature type="sequence variant" id="VAR_043728" description="In dbSNP:rs3738477.">
    <original>G</original>
    <variation>S</variation>
    <location>
        <position position="397"/>
    </location>
</feature>
<feature type="mutagenesis site" description="Partial loss of cAMP PDE activity. Partial loss of cAMP PDE activity; when associated with D-106. Partial loss of cAMP PDE activity; when associated with D-106 and D-179." evidence="6">
    <original>D</original>
    <variation>A</variation>
    <location>
        <position position="28"/>
    </location>
</feature>
<feature type="mutagenesis site" description="No change in cAMP PDE activity. Partial loss of cAMP PDE activity; when associated with D-28. Partial loss of cAMP PDE activity; when associated with D-28 and D-179." evidence="6">
    <original>D</original>
    <variation>A</variation>
    <location>
        <position position="106"/>
    </location>
</feature>
<feature type="mutagenesis site" description="Partial loss of cAMP PDE activity." evidence="6">
    <original>DHRP</original>
    <variation>AAAA</variation>
    <location>
        <begin position="126"/>
        <end position="129"/>
    </location>
</feature>
<feature type="mutagenesis site" description="Partial loss of cAMP PDE activity. Partial loss of cAMP PDE activity; when associated with D-28 and D-106." evidence="6">
    <original>D</original>
    <variation>A</variation>
    <location>
        <position position="179"/>
    </location>
</feature>
<feature type="sequence conflict" description="In Ref. 2; AAK00592." evidence="18" ref="2">
    <original>E</original>
    <variation>A</variation>
    <location>
        <position position="14"/>
    </location>
</feature>
<feature type="sequence conflict" description="In Ref. 7; AAF04914." evidence="18" ref="7">
    <original>HVVL</original>
    <variation>AWHE</variation>
    <location>
        <begin position="19"/>
        <end position="22"/>
    </location>
</feature>
<feature type="sequence conflict" description="In Ref. 1; AAC95290 and 7; AAF04914." evidence="18" ref="1 7">
    <original>A</original>
    <variation>V</variation>
    <location>
        <position position="221"/>
    </location>
</feature>
<keyword id="KW-0007">Acetylation</keyword>
<keyword id="KW-0025">Alternative splicing</keyword>
<keyword id="KW-0965">Cell junction</keyword>
<keyword id="KW-0963">Cytoplasm</keyword>
<keyword id="KW-0225">Disease variant</keyword>
<keyword id="KW-0378">Hydrolase</keyword>
<keyword id="KW-0991">Intellectual disability</keyword>
<keyword id="KW-0464">Manganese</keyword>
<keyword id="KW-0479">Metal-binding</keyword>
<keyword id="KW-0523">Neurodegeneration</keyword>
<keyword id="KW-0539">Nucleus</keyword>
<keyword id="KW-0597">Phosphoprotein</keyword>
<keyword id="KW-0905">Primary microcephaly</keyword>
<keyword id="KW-1267">Proteomics identification</keyword>
<keyword id="KW-1185">Reference proteome</keyword>
<comment type="function">
    <text evidence="4 5 6 8 10 13">Phosphodiesterase (PDE) that has higher activity toward cAMP than cGMP, as substrate. Plays a role in cell proliferation, migration and differentiation, and acts as a negative regulator of NME1. Plays a role in the regulation of neurogenesis (PubMed:28334956). Involved in the regulation of microtubule polymerization (PubMed:28334956).</text>
</comment>
<comment type="catalytic activity">
    <reaction>
        <text>diphosphate + H2O = 2 phosphate + H(+)</text>
        <dbReference type="Rhea" id="RHEA:24576"/>
        <dbReference type="ChEBI" id="CHEBI:15377"/>
        <dbReference type="ChEBI" id="CHEBI:15378"/>
        <dbReference type="ChEBI" id="CHEBI:33019"/>
        <dbReference type="ChEBI" id="CHEBI:43474"/>
        <dbReference type="EC" id="3.6.1.1"/>
    </reaction>
</comment>
<comment type="cofactor">
    <cofactor evidence="1">
        <name>Mn(2+)</name>
        <dbReference type="ChEBI" id="CHEBI:29035"/>
    </cofactor>
    <text evidence="1">Binds 2 manganese ions per subunit.</text>
</comment>
<comment type="activity regulation">
    <text evidence="6">Activated by magnesium ions and inhibited by manganese ions. Inhibited by dipyridamole, moderately sensitive to IBMX and inhibited by vinpocetine.</text>
</comment>
<comment type="biophysicochemical properties">
    <kinetics>
        <KM evidence="6 9">0.91 uM for cAMP</KM>
        <KM evidence="6 9">2.3 uM for cGMP</KM>
        <Vmax evidence="6 9">12.8 pmol/min/ug enzyme with cAMP as substrate</Vmax>
        <Vmax evidence="6 9">0.8 pmol/min/ug enzyme with cGMP as substrate</Vmax>
    </kinetics>
</comment>
<comment type="subunit">
    <text evidence="4 6 8 9 10 13">Homooligomer. Able to homodimerize via its C-terminal domain. Interacts with NME1. Interacts with GSK3; at focal adhesion complexes where paxillin and vinculin are colocalized. Interacts with alpha and beta tubulin (PubMed:28334956).</text>
</comment>
<comment type="interaction">
    <interactant intactId="EBI-2127112">
        <id>Q86TP1</id>
    </interactant>
    <interactant intactId="EBI-12823659">
        <id>Q5JRM2</id>
        <label>CXorf66</label>
    </interactant>
    <organismsDiffer>false</organismsDiffer>
    <experiments>2</experiments>
</comment>
<comment type="interaction">
    <interactant intactId="EBI-2127112">
        <id>Q86TP1</id>
    </interactant>
    <interactant intactId="EBI-741141">
        <id>P15531</id>
        <label>NME1</label>
    </interactant>
    <organismsDiffer>false</organismsDiffer>
    <experiments>2</experiments>
</comment>
<comment type="subcellular location">
    <subcellularLocation>
        <location>Cytoplasm</location>
    </subcellularLocation>
    <subcellularLocation>
        <location>Nucleus</location>
    </subcellularLocation>
    <subcellularLocation>
        <location>Cell junction</location>
        <location>Focal adhesion</location>
    </subcellularLocation>
    <text>In some transfected cells a nuclear staining is also observed.</text>
</comment>
<comment type="alternative products">
    <event type="alternative splicing"/>
    <isoform>
        <id>Q86TP1-1</id>
        <name>1</name>
        <sequence type="displayed"/>
    </isoform>
    <isoform>
        <id>Q86TP1-2</id>
        <name>2</name>
        <sequence type="described" ref="VSP_034016"/>
    </isoform>
    <isoform>
        <id>Q86TP1-3</id>
        <name>3</name>
        <sequence type="described" ref="VSP_034014"/>
    </isoform>
    <isoform>
        <id>Q86TP1-4</id>
        <name>4</name>
        <sequence type="described" ref="VSP_034015 VSP_034017"/>
    </isoform>
    <isoform>
        <id>Q86TP1-5</id>
        <name>5</name>
        <sequence type="described" ref="VSP_034014 VSP_034017"/>
    </isoform>
    <isoform>
        <id>Q86TP1-6</id>
        <name>6</name>
        <sequence type="described" ref="VSP_034013 VSP_034017"/>
    </isoform>
    <isoform>
        <id>Q86TP1-7</id>
        <name>7</name>
        <sequence type="described" ref="VSP_034013"/>
    </isoform>
</comment>
<comment type="tissue specificity">
    <text evidence="4 5 7">Ubiquitously expressed. Seems to be overexpressed in aggressive sarcoma subtypes, such as leiomyosarcomas and malignant fibrous histiocytomas (MFH) as well as in the less malignant liposarcomas.</text>
</comment>
<comment type="disease" evidence="11 12 13">
    <disease id="DI-05004">
        <name>Neurodevelopmental disorder with microcephaly, hypotonia, and variable brain anomalies</name>
        <acronym>NMIHBA</acronym>
        <description>An autosomal recessive neurodevelopmental and degenerative disorder characterized by primary microcephaly, profound global developmental delay, and severe intellectual disability. Additional clinical features include dysmorphic features, truncal hypotonia, peripheral spasticity, and lack of independent ambulation or speech acquisition. Brain imaging shows cortical atrophy, thin corpus callosum, cerebellar hypoplasia, and delayed myelination.</description>
        <dbReference type="MIM" id="617481"/>
    </disease>
    <text>The disease is caused by variants affecting the gene represented in this entry.</text>
</comment>
<comment type="similarity">
    <text evidence="18">Belongs to the PPase class C family. Prune subfamily.</text>
</comment>
<comment type="sequence caution" evidence="18">
    <conflict type="erroneous initiation">
        <sequence resource="EMBL-CDS" id="BAB55423"/>
    </conflict>
</comment>
<comment type="sequence caution" evidence="18">
    <conflict type="erroneous initiation">
        <sequence resource="EMBL-CDS" id="BAG60534"/>
    </conflict>
</comment>
<protein>
    <recommendedName>
        <fullName>Exopolyphosphatase PRUNE1</fullName>
        <ecNumber>3.6.1.1</ecNumber>
    </recommendedName>
    <alternativeName>
        <fullName>Drosophila-related expressed sequence 17</fullName>
        <shortName>DRES-17</shortName>
        <shortName>DRES17</shortName>
    </alternativeName>
    <alternativeName>
        <fullName>HTcD37</fullName>
    </alternativeName>
    <alternativeName>
        <fullName>Protein prune homolog 1</fullName>
        <shortName>hPrune</shortName>
    </alternativeName>
</protein>
<sequence>MEDYLQGCRAALQESRPLHVVLGNEACDLDSTVSALALAFYLAKTTEAEEVFVPVLNIKRSELPLRGDIVFFLQKVHIPESILIFRDEIDLHALYQAGQLTLILVDHHILSKSDTALEEAVAEVLDHRPIEPKHCPPCHVSVELVGSCATLVTERILQGAPEILDRQTAALLHGTIILDCVNMDLKIGKATPKDSKYVEKLEALFPDLPKRNDIFDSLQKAKFDVSGLTTEQMLRKDQKTIYRQGVKVAISAIYMDLEAFLQRSNLLADLHAFCQAHSYDVLVAMTIFFNTHNEPVRQLAIFCPHVALQTTICEVLERSHSPPLKLTPASSTHPNLHAYLQGNTQVSRKKLLPLLQEALSAYFDSMKIPSGQPETADVSREQVDKELDRASNSLISGLSQDEEDPPLPPTPMNSLVDECPLDQGLPKLSAEAVFEKCSQISLSQSTTASLSKK</sequence>
<dbReference type="EC" id="3.6.1.1"/>
<dbReference type="EMBL" id="AF051907">
    <property type="protein sequence ID" value="AAC95290.1"/>
    <property type="molecule type" value="mRNA"/>
</dbReference>
<dbReference type="EMBL" id="AF123538">
    <property type="protein sequence ID" value="AAK00592.1"/>
    <property type="molecule type" value="mRNA"/>
</dbReference>
<dbReference type="EMBL" id="AF123539">
    <property type="protein sequence ID" value="AAK00593.1"/>
    <property type="molecule type" value="mRNA"/>
</dbReference>
<dbReference type="EMBL" id="AK027875">
    <property type="protein sequence ID" value="BAB55423.1"/>
    <property type="status" value="ALT_INIT"/>
    <property type="molecule type" value="mRNA"/>
</dbReference>
<dbReference type="EMBL" id="AK294154">
    <property type="protein sequence ID" value="BAG57478.1"/>
    <property type="molecule type" value="mRNA"/>
</dbReference>
<dbReference type="EMBL" id="AK298273">
    <property type="protein sequence ID" value="BAG60534.1"/>
    <property type="status" value="ALT_INIT"/>
    <property type="molecule type" value="mRNA"/>
</dbReference>
<dbReference type="EMBL" id="AK315120">
    <property type="protein sequence ID" value="BAG37575.1"/>
    <property type="molecule type" value="mRNA"/>
</dbReference>
<dbReference type="EMBL" id="AL590133">
    <property type="status" value="NOT_ANNOTATED_CDS"/>
    <property type="molecule type" value="Genomic_DNA"/>
</dbReference>
<dbReference type="EMBL" id="CH471121">
    <property type="protein sequence ID" value="EAW53486.1"/>
    <property type="molecule type" value="Genomic_DNA"/>
</dbReference>
<dbReference type="EMBL" id="CH471121">
    <property type="protein sequence ID" value="EAW53488.1"/>
    <property type="molecule type" value="Genomic_DNA"/>
</dbReference>
<dbReference type="EMBL" id="CH471121">
    <property type="protein sequence ID" value="EAW53489.1"/>
    <property type="molecule type" value="Genomic_DNA"/>
</dbReference>
<dbReference type="EMBL" id="BC014886">
    <property type="protein sequence ID" value="AAH14886.1"/>
    <property type="molecule type" value="mRNA"/>
</dbReference>
<dbReference type="EMBL" id="BC025304">
    <property type="protein sequence ID" value="AAH25304.1"/>
    <property type="molecule type" value="mRNA"/>
</dbReference>
<dbReference type="EMBL" id="BC063481">
    <property type="protein sequence ID" value="AAH63481.1"/>
    <property type="molecule type" value="mRNA"/>
</dbReference>
<dbReference type="EMBL" id="U67085">
    <property type="protein sequence ID" value="AAF04914.1"/>
    <property type="molecule type" value="mRNA"/>
</dbReference>
<dbReference type="EMBL" id="AL122054">
    <property type="protein sequence ID" value="CAH56396.1"/>
    <property type="molecule type" value="mRNA"/>
</dbReference>
<dbReference type="CCDS" id="CCDS76211.1">
    <molecule id="Q86TP1-3"/>
</dbReference>
<dbReference type="CCDS" id="CCDS977.1">
    <molecule id="Q86TP1-1"/>
</dbReference>
<dbReference type="RefSeq" id="NP_001290158.1">
    <molecule id="Q86TP1-3"/>
    <property type="nucleotide sequence ID" value="NM_001303229.2"/>
</dbReference>
<dbReference type="RefSeq" id="NP_001290171.1">
    <property type="nucleotide sequence ID" value="NM_001303242.1"/>
</dbReference>
<dbReference type="RefSeq" id="NP_001290172.1">
    <property type="nucleotide sequence ID" value="NM_001303243.1"/>
</dbReference>
<dbReference type="RefSeq" id="NP_067045.1">
    <molecule id="Q86TP1-1"/>
    <property type="nucleotide sequence ID" value="NM_021222.3"/>
</dbReference>
<dbReference type="RefSeq" id="XP_011508134.1">
    <molecule id="Q86TP1-3"/>
    <property type="nucleotide sequence ID" value="XM_011509832.3"/>
</dbReference>
<dbReference type="RefSeq" id="XP_016857445.1">
    <property type="nucleotide sequence ID" value="XM_017001956.1"/>
</dbReference>
<dbReference type="RefSeq" id="XP_047282563.1">
    <molecule id="Q86TP1-3"/>
    <property type="nucleotide sequence ID" value="XM_047426607.1"/>
</dbReference>
<dbReference type="RefSeq" id="XP_054193971.1">
    <molecule id="Q86TP1-3"/>
    <property type="nucleotide sequence ID" value="XM_054337996.1"/>
</dbReference>
<dbReference type="RefSeq" id="XP_054193972.1">
    <molecule id="Q86TP1-3"/>
    <property type="nucleotide sequence ID" value="XM_054337997.1"/>
</dbReference>
<dbReference type="BMRB" id="Q86TP1"/>
<dbReference type="SMR" id="Q86TP1"/>
<dbReference type="BioGRID" id="121827">
    <property type="interactions" value="37"/>
</dbReference>
<dbReference type="CORUM" id="Q86TP1"/>
<dbReference type="FunCoup" id="Q86TP1">
    <property type="interactions" value="1272"/>
</dbReference>
<dbReference type="IntAct" id="Q86TP1">
    <property type="interactions" value="18"/>
</dbReference>
<dbReference type="STRING" id="9606.ENSP00000271620"/>
<dbReference type="BindingDB" id="Q86TP1"/>
<dbReference type="ChEMBL" id="CHEMBL2079850"/>
<dbReference type="DrugCentral" id="Q86TP1"/>
<dbReference type="GlyGen" id="Q86TP1">
    <property type="glycosylation" value="2 sites, 1 O-linked glycan (1 site)"/>
</dbReference>
<dbReference type="iPTMnet" id="Q86TP1"/>
<dbReference type="PhosphoSitePlus" id="Q86TP1"/>
<dbReference type="BioMuta" id="PRUNE1"/>
<dbReference type="DMDM" id="229462737"/>
<dbReference type="jPOST" id="Q86TP1"/>
<dbReference type="MassIVE" id="Q86TP1"/>
<dbReference type="PaxDb" id="9606-ENSP00000271620"/>
<dbReference type="PeptideAtlas" id="Q86TP1"/>
<dbReference type="ProteomicsDB" id="69719">
    <molecule id="Q86TP1-1"/>
</dbReference>
<dbReference type="ProteomicsDB" id="69720">
    <molecule id="Q86TP1-2"/>
</dbReference>
<dbReference type="ProteomicsDB" id="69721">
    <molecule id="Q86TP1-3"/>
</dbReference>
<dbReference type="ProteomicsDB" id="69722">
    <molecule id="Q86TP1-4"/>
</dbReference>
<dbReference type="ProteomicsDB" id="69723">
    <molecule id="Q86TP1-5"/>
</dbReference>
<dbReference type="ProteomicsDB" id="69724">
    <molecule id="Q86TP1-6"/>
</dbReference>
<dbReference type="ProteomicsDB" id="69725">
    <molecule id="Q86TP1-7"/>
</dbReference>
<dbReference type="Pumba" id="Q86TP1"/>
<dbReference type="Antibodypedia" id="34044">
    <property type="antibodies" value="206 antibodies from 28 providers"/>
</dbReference>
<dbReference type="DNASU" id="58497"/>
<dbReference type="Ensembl" id="ENST00000271620.8">
    <molecule id="Q86TP1-1"/>
    <property type="protein sequence ID" value="ENSP00000271620.3"/>
    <property type="gene ID" value="ENSG00000143363.17"/>
</dbReference>
<dbReference type="Ensembl" id="ENST00000368934.1">
    <molecule id="Q86TP1-5"/>
    <property type="protein sequence ID" value="ENSP00000357930.1"/>
    <property type="gene ID" value="ENSG00000143363.17"/>
</dbReference>
<dbReference type="Ensembl" id="ENST00000368935.1">
    <molecule id="Q86TP1-6"/>
    <property type="protein sequence ID" value="ENSP00000357931.1"/>
    <property type="gene ID" value="ENSG00000143363.17"/>
</dbReference>
<dbReference type="Ensembl" id="ENST00000368936.5">
    <molecule id="Q86TP1-3"/>
    <property type="protein sequence ID" value="ENSP00000357932.1"/>
    <property type="gene ID" value="ENSG00000143363.17"/>
</dbReference>
<dbReference type="Ensembl" id="ENST00000368937.5">
    <molecule id="Q86TP1-5"/>
    <property type="protein sequence ID" value="ENSP00000357933.1"/>
    <property type="gene ID" value="ENSG00000143363.17"/>
</dbReference>
<dbReference type="GeneID" id="58497"/>
<dbReference type="KEGG" id="hsa:58497"/>
<dbReference type="MANE-Select" id="ENST00000271620.8">
    <property type="protein sequence ID" value="ENSP00000271620.3"/>
    <property type="RefSeq nucleotide sequence ID" value="NM_021222.3"/>
    <property type="RefSeq protein sequence ID" value="NP_067045.1"/>
</dbReference>
<dbReference type="UCSC" id="uc001ewh.2">
    <molecule id="Q86TP1-1"/>
    <property type="organism name" value="human"/>
</dbReference>
<dbReference type="AGR" id="HGNC:13420"/>
<dbReference type="CTD" id="58497"/>
<dbReference type="DisGeNET" id="58497"/>
<dbReference type="GeneCards" id="PRUNE1"/>
<dbReference type="HGNC" id="HGNC:13420">
    <property type="gene designation" value="PRUNE1"/>
</dbReference>
<dbReference type="HPA" id="ENSG00000143363">
    <property type="expression patterns" value="Low tissue specificity"/>
</dbReference>
<dbReference type="MalaCards" id="PRUNE1"/>
<dbReference type="MIM" id="617413">
    <property type="type" value="gene"/>
</dbReference>
<dbReference type="MIM" id="617481">
    <property type="type" value="phenotype"/>
</dbReference>
<dbReference type="neXtProt" id="NX_Q86TP1"/>
<dbReference type="OpenTargets" id="ENSG00000143363"/>
<dbReference type="Orphanet" id="544469">
    <property type="disease" value="PRUNE1-related neurological syndrome"/>
</dbReference>
<dbReference type="PharmGKB" id="PA134939749"/>
<dbReference type="VEuPathDB" id="HostDB:ENSG00000143363"/>
<dbReference type="eggNOG" id="KOG4129">
    <property type="taxonomic scope" value="Eukaryota"/>
</dbReference>
<dbReference type="GeneTree" id="ENSGT00450000040262"/>
<dbReference type="HOGENOM" id="CLU_019358_2_0_1"/>
<dbReference type="InParanoid" id="Q86TP1"/>
<dbReference type="OMA" id="TMTIFFN"/>
<dbReference type="OrthoDB" id="374045at2759"/>
<dbReference type="PAN-GO" id="Q86TP1">
    <property type="GO annotations" value="2 GO annotations based on evolutionary models"/>
</dbReference>
<dbReference type="PhylomeDB" id="Q86TP1"/>
<dbReference type="TreeFam" id="TF323914"/>
<dbReference type="PathwayCommons" id="Q86TP1"/>
<dbReference type="SABIO-RK" id="Q86TP1"/>
<dbReference type="SignaLink" id="Q86TP1"/>
<dbReference type="BioGRID-ORCS" id="58497">
    <property type="hits" value="96 hits in 1165 CRISPR screens"/>
</dbReference>
<dbReference type="ChiTaRS" id="PRUNE1">
    <property type="organism name" value="human"/>
</dbReference>
<dbReference type="GenomeRNAi" id="58497"/>
<dbReference type="Pharos" id="Q86TP1">
    <property type="development level" value="Tchem"/>
</dbReference>
<dbReference type="PRO" id="PR:Q86TP1"/>
<dbReference type="Proteomes" id="UP000005640">
    <property type="component" value="Chromosome 1"/>
</dbReference>
<dbReference type="RNAct" id="Q86TP1">
    <property type="molecule type" value="protein"/>
</dbReference>
<dbReference type="Bgee" id="ENSG00000143363">
    <property type="expression patterns" value="Expressed in islet of Langerhans and 146 other cell types or tissues"/>
</dbReference>
<dbReference type="ExpressionAtlas" id="Q86TP1">
    <property type="expression patterns" value="baseline and differential"/>
</dbReference>
<dbReference type="GO" id="GO:0005737">
    <property type="term" value="C:cytoplasm"/>
    <property type="evidence" value="ECO:0000318"/>
    <property type="project" value="GO_Central"/>
</dbReference>
<dbReference type="GO" id="GO:0005829">
    <property type="term" value="C:cytosol"/>
    <property type="evidence" value="ECO:0000314"/>
    <property type="project" value="HPA"/>
</dbReference>
<dbReference type="GO" id="GO:0005925">
    <property type="term" value="C:focal adhesion"/>
    <property type="evidence" value="ECO:0007669"/>
    <property type="project" value="UniProtKB-SubCell"/>
</dbReference>
<dbReference type="GO" id="GO:0005634">
    <property type="term" value="C:nucleus"/>
    <property type="evidence" value="ECO:0007669"/>
    <property type="project" value="UniProtKB-SubCell"/>
</dbReference>
<dbReference type="GO" id="GO:0004309">
    <property type="term" value="F:exopolyphosphatase activity"/>
    <property type="evidence" value="ECO:0000318"/>
    <property type="project" value="GO_Central"/>
</dbReference>
<dbReference type="GO" id="GO:0004427">
    <property type="term" value="F:inorganic diphosphate phosphatase activity"/>
    <property type="evidence" value="ECO:0007669"/>
    <property type="project" value="UniProtKB-EC"/>
</dbReference>
<dbReference type="GO" id="GO:0046872">
    <property type="term" value="F:metal ion binding"/>
    <property type="evidence" value="ECO:0007669"/>
    <property type="project" value="UniProtKB-KW"/>
</dbReference>
<dbReference type="GO" id="GO:0016791">
    <property type="term" value="F:phosphatase activity"/>
    <property type="evidence" value="ECO:0000314"/>
    <property type="project" value="UniProtKB"/>
</dbReference>
<dbReference type="GO" id="GO:0015631">
    <property type="term" value="F:tubulin binding"/>
    <property type="evidence" value="ECO:0000314"/>
    <property type="project" value="UniProtKB"/>
</dbReference>
<dbReference type="GO" id="GO:0031113">
    <property type="term" value="P:regulation of microtubule polymerization"/>
    <property type="evidence" value="ECO:0000315"/>
    <property type="project" value="UniProtKB"/>
</dbReference>
<dbReference type="GO" id="GO:0050767">
    <property type="term" value="P:regulation of neurogenesis"/>
    <property type="evidence" value="ECO:0000315"/>
    <property type="project" value="UniProtKB"/>
</dbReference>
<dbReference type="FunFam" id="3.10.310.20:FF:000003">
    <property type="entry name" value="Prune exopolyphosphatase 1"/>
    <property type="match status" value="1"/>
</dbReference>
<dbReference type="FunFam" id="3.90.1640.10:FF:000004">
    <property type="entry name" value="Prune exopolyphosphatase 1"/>
    <property type="match status" value="1"/>
</dbReference>
<dbReference type="Gene3D" id="3.10.310.20">
    <property type="entry name" value="DHHA2 domain"/>
    <property type="match status" value="1"/>
</dbReference>
<dbReference type="Gene3D" id="3.90.1640.10">
    <property type="entry name" value="inorganic pyrophosphatase (n-terminal core)"/>
    <property type="match status" value="1"/>
</dbReference>
<dbReference type="InterPro" id="IPR001667">
    <property type="entry name" value="DDH_dom"/>
</dbReference>
<dbReference type="InterPro" id="IPR038763">
    <property type="entry name" value="DHH_sf"/>
</dbReference>
<dbReference type="InterPro" id="IPR004097">
    <property type="entry name" value="DHHA2"/>
</dbReference>
<dbReference type="InterPro" id="IPR038222">
    <property type="entry name" value="DHHA2_dom_sf"/>
</dbReference>
<dbReference type="PANTHER" id="PTHR12112">
    <property type="entry name" value="BNIP - RELATED"/>
    <property type="match status" value="1"/>
</dbReference>
<dbReference type="PANTHER" id="PTHR12112:SF47">
    <property type="entry name" value="EXOPOLYPHOSPHATASE PRUNE1"/>
    <property type="match status" value="1"/>
</dbReference>
<dbReference type="Pfam" id="PF01368">
    <property type="entry name" value="DHH"/>
    <property type="match status" value="1"/>
</dbReference>
<dbReference type="Pfam" id="PF02833">
    <property type="entry name" value="DHHA2"/>
    <property type="match status" value="1"/>
</dbReference>
<dbReference type="SMART" id="SM01131">
    <property type="entry name" value="DHHA2"/>
    <property type="match status" value="1"/>
</dbReference>
<dbReference type="SUPFAM" id="SSF64182">
    <property type="entry name" value="DHH phosphoesterases"/>
    <property type="match status" value="1"/>
</dbReference>